<comment type="function">
    <text evidence="1">Ligates lysine onto the cytidine present at position 34 of the AUA codon-specific tRNA(Ile) that contains the anticodon CAU, in an ATP-dependent manner. Cytidine is converted to lysidine, thus changing the amino acid specificity of the tRNA from methionine to isoleucine.</text>
</comment>
<comment type="catalytic activity">
    <reaction evidence="1">
        <text>cytidine(34) in tRNA(Ile2) + L-lysine + ATP = lysidine(34) in tRNA(Ile2) + AMP + diphosphate + H(+)</text>
        <dbReference type="Rhea" id="RHEA:43744"/>
        <dbReference type="Rhea" id="RHEA-COMP:10625"/>
        <dbReference type="Rhea" id="RHEA-COMP:10670"/>
        <dbReference type="ChEBI" id="CHEBI:15378"/>
        <dbReference type="ChEBI" id="CHEBI:30616"/>
        <dbReference type="ChEBI" id="CHEBI:32551"/>
        <dbReference type="ChEBI" id="CHEBI:33019"/>
        <dbReference type="ChEBI" id="CHEBI:82748"/>
        <dbReference type="ChEBI" id="CHEBI:83665"/>
        <dbReference type="ChEBI" id="CHEBI:456215"/>
        <dbReference type="EC" id="6.3.4.19"/>
    </reaction>
</comment>
<comment type="subcellular location">
    <subcellularLocation>
        <location evidence="1">Cytoplasm</location>
    </subcellularLocation>
</comment>
<comment type="domain">
    <text>The N-terminal region contains the highly conserved SGGXDS motif, predicted to be a P-loop motif involved in ATP binding.</text>
</comment>
<comment type="similarity">
    <text evidence="1">Belongs to the tRNA(Ile)-lysidine synthase family.</text>
</comment>
<reference key="1">
    <citation type="journal article" date="2000" name="Nucleic Acids Res.">
        <title>Genome sequences of Chlamydia trachomatis MoPn and Chlamydia pneumoniae AR39.</title>
        <authorList>
            <person name="Read T.D."/>
            <person name="Brunham R.C."/>
            <person name="Shen C."/>
            <person name="Gill S.R."/>
            <person name="Heidelberg J.F."/>
            <person name="White O."/>
            <person name="Hickey E.K."/>
            <person name="Peterson J.D."/>
            <person name="Utterback T.R."/>
            <person name="Berry K.J."/>
            <person name="Bass S."/>
            <person name="Linher K.D."/>
            <person name="Weidman J.F."/>
            <person name="Khouri H.M."/>
            <person name="Craven B."/>
            <person name="Bowman C."/>
            <person name="Dodson R.J."/>
            <person name="Gwinn M.L."/>
            <person name="Nelson W.C."/>
            <person name="DeBoy R.T."/>
            <person name="Kolonay J.F."/>
            <person name="McClarty G."/>
            <person name="Salzberg S.L."/>
            <person name="Eisen J.A."/>
            <person name="Fraser C.M."/>
        </authorList>
    </citation>
    <scope>NUCLEOTIDE SEQUENCE [LARGE SCALE GENOMIC DNA]</scope>
    <source>
        <strain>MoPn / Nigg</strain>
    </source>
</reference>
<dbReference type="EC" id="6.3.4.19" evidence="1"/>
<dbReference type="EMBL" id="AE002160">
    <property type="protein sequence ID" value="AAF39100.1"/>
    <property type="molecule type" value="Genomic_DNA"/>
</dbReference>
<dbReference type="PIR" id="E81725">
    <property type="entry name" value="E81725"/>
</dbReference>
<dbReference type="RefSeq" id="WP_010229866.1">
    <property type="nucleotide sequence ID" value="NZ_CP063055.1"/>
</dbReference>
<dbReference type="SMR" id="Q9PL79"/>
<dbReference type="GeneID" id="1246397"/>
<dbReference type="KEGG" id="cmu:TC_0228"/>
<dbReference type="eggNOG" id="COG0037">
    <property type="taxonomic scope" value="Bacteria"/>
</dbReference>
<dbReference type="HOGENOM" id="CLU_870675_0_0_0"/>
<dbReference type="OrthoDB" id="9807403at2"/>
<dbReference type="Proteomes" id="UP000000800">
    <property type="component" value="Chromosome"/>
</dbReference>
<dbReference type="GO" id="GO:0005737">
    <property type="term" value="C:cytoplasm"/>
    <property type="evidence" value="ECO:0007669"/>
    <property type="project" value="UniProtKB-SubCell"/>
</dbReference>
<dbReference type="GO" id="GO:0005524">
    <property type="term" value="F:ATP binding"/>
    <property type="evidence" value="ECO:0007669"/>
    <property type="project" value="UniProtKB-UniRule"/>
</dbReference>
<dbReference type="GO" id="GO:0032267">
    <property type="term" value="F:tRNA(Ile)-lysidine synthase activity"/>
    <property type="evidence" value="ECO:0007669"/>
    <property type="project" value="UniProtKB-EC"/>
</dbReference>
<dbReference type="GO" id="GO:0006400">
    <property type="term" value="P:tRNA modification"/>
    <property type="evidence" value="ECO:0007669"/>
    <property type="project" value="UniProtKB-UniRule"/>
</dbReference>
<dbReference type="CDD" id="cd01992">
    <property type="entry name" value="TilS_N"/>
    <property type="match status" value="1"/>
</dbReference>
<dbReference type="Gene3D" id="3.40.50.620">
    <property type="entry name" value="HUPs"/>
    <property type="match status" value="1"/>
</dbReference>
<dbReference type="HAMAP" id="MF_01161">
    <property type="entry name" value="tRNA_Ile_lys_synt"/>
    <property type="match status" value="1"/>
</dbReference>
<dbReference type="InterPro" id="IPR014729">
    <property type="entry name" value="Rossmann-like_a/b/a_fold"/>
</dbReference>
<dbReference type="InterPro" id="IPR011063">
    <property type="entry name" value="TilS/TtcA_N"/>
</dbReference>
<dbReference type="InterPro" id="IPR012094">
    <property type="entry name" value="tRNA_Ile_lys_synt"/>
</dbReference>
<dbReference type="InterPro" id="IPR012795">
    <property type="entry name" value="tRNA_Ile_lys_synt_N"/>
</dbReference>
<dbReference type="NCBIfam" id="TIGR02432">
    <property type="entry name" value="lysidine_TilS_N"/>
    <property type="match status" value="1"/>
</dbReference>
<dbReference type="PANTHER" id="PTHR43033">
    <property type="entry name" value="TRNA(ILE)-LYSIDINE SYNTHASE-RELATED"/>
    <property type="match status" value="1"/>
</dbReference>
<dbReference type="PANTHER" id="PTHR43033:SF1">
    <property type="entry name" value="TRNA(ILE)-LYSIDINE SYNTHASE-RELATED"/>
    <property type="match status" value="1"/>
</dbReference>
<dbReference type="Pfam" id="PF01171">
    <property type="entry name" value="ATP_bind_3"/>
    <property type="match status" value="1"/>
</dbReference>
<dbReference type="SUPFAM" id="SSF52402">
    <property type="entry name" value="Adenine nucleotide alpha hydrolases-like"/>
    <property type="match status" value="1"/>
</dbReference>
<protein>
    <recommendedName>
        <fullName evidence="1">tRNA(Ile)-lysidine synthase</fullName>
        <ecNumber evidence="1">6.3.4.19</ecNumber>
    </recommendedName>
    <alternativeName>
        <fullName evidence="1">tRNA(Ile)-2-lysyl-cytidine synthase</fullName>
    </alternativeName>
    <alternativeName>
        <fullName evidence="1">tRNA(Ile)-lysidine synthetase</fullName>
    </alternativeName>
</protein>
<name>TILS_CHLMU</name>
<organism>
    <name type="scientific">Chlamydia muridarum (strain MoPn / Nigg)</name>
    <dbReference type="NCBI Taxonomy" id="243161"/>
    <lineage>
        <taxon>Bacteria</taxon>
        <taxon>Pseudomonadati</taxon>
        <taxon>Chlamydiota</taxon>
        <taxon>Chlamydiia</taxon>
        <taxon>Chlamydiales</taxon>
        <taxon>Chlamydiaceae</taxon>
        <taxon>Chlamydia/Chlamydophila group</taxon>
        <taxon>Chlamydia</taxon>
    </lineage>
</organism>
<sequence>MVIRLFENDKQLEVFFSSLDKKKKYLLALSGGSDSLLLMYLLRSRGISFTAVHVDYGWRETSYQEACDLASLCEREQIPFILDRQEVANPMDFSDIENIARQYRYELFYRLCKERLFAGVFLGHHADDQAETILKRVFEGAHLGNLKGMARYGTYKGITLLRPLLHITKRQIVEALDNYRIEYVQDATNADERFLRARMREQLFPYLQEIFGKNIRQPLLFLAEDSAELREYLDQQAAPFLSQVIDNEIGQFLPVGQELLQTAFLTKWVCKQFFFKQGLVASKGFLQTVYDHLVRRSEARLRLRNRTVLVKARGVIIESIY</sequence>
<accession>Q9PL79</accession>
<proteinExistence type="inferred from homology"/>
<gene>
    <name evidence="1" type="primary">tilS</name>
    <name type="ordered locus">TC_0228</name>
</gene>
<feature type="chain" id="PRO_0000181674" description="tRNA(Ile)-lysidine synthase">
    <location>
        <begin position="1"/>
        <end position="321"/>
    </location>
</feature>
<feature type="binding site" evidence="1">
    <location>
        <begin position="30"/>
        <end position="35"/>
    </location>
    <ligand>
        <name>ATP</name>
        <dbReference type="ChEBI" id="CHEBI:30616"/>
    </ligand>
</feature>
<evidence type="ECO:0000255" key="1">
    <source>
        <dbReference type="HAMAP-Rule" id="MF_01161"/>
    </source>
</evidence>
<keyword id="KW-0067">ATP-binding</keyword>
<keyword id="KW-0963">Cytoplasm</keyword>
<keyword id="KW-0436">Ligase</keyword>
<keyword id="KW-0547">Nucleotide-binding</keyword>
<keyword id="KW-0819">tRNA processing</keyword>